<organism>
    <name type="scientific">Xylella fastidiosa (strain M23)</name>
    <dbReference type="NCBI Taxonomy" id="405441"/>
    <lineage>
        <taxon>Bacteria</taxon>
        <taxon>Pseudomonadati</taxon>
        <taxon>Pseudomonadota</taxon>
        <taxon>Gammaproteobacteria</taxon>
        <taxon>Lysobacterales</taxon>
        <taxon>Lysobacteraceae</taxon>
        <taxon>Xylella</taxon>
    </lineage>
</organism>
<reference key="1">
    <citation type="journal article" date="2010" name="J. Bacteriol.">
        <title>Whole genome sequences of two Xylella fastidiosa strains (M12 and M23) causing almond leaf scorch disease in California.</title>
        <authorList>
            <person name="Chen J."/>
            <person name="Xie G."/>
            <person name="Han S."/>
            <person name="Chertkov O."/>
            <person name="Sims D."/>
            <person name="Civerolo E.L."/>
        </authorList>
    </citation>
    <scope>NUCLEOTIDE SEQUENCE [LARGE SCALE GENOMIC DNA]</scope>
    <source>
        <strain>M23</strain>
    </source>
</reference>
<feature type="chain" id="PRO_1000130080" description="Chaperonin GroEL">
    <location>
        <begin position="1"/>
        <end position="547"/>
    </location>
</feature>
<feature type="region of interest" description="Disordered" evidence="2">
    <location>
        <begin position="524"/>
        <end position="547"/>
    </location>
</feature>
<feature type="compositionally biased region" description="Gly residues" evidence="2">
    <location>
        <begin position="535"/>
        <end position="547"/>
    </location>
</feature>
<feature type="binding site" evidence="1">
    <location>
        <begin position="30"/>
        <end position="33"/>
    </location>
    <ligand>
        <name>ATP</name>
        <dbReference type="ChEBI" id="CHEBI:30616"/>
    </ligand>
</feature>
<feature type="binding site" evidence="1">
    <location>
        <position position="51"/>
    </location>
    <ligand>
        <name>ATP</name>
        <dbReference type="ChEBI" id="CHEBI:30616"/>
    </ligand>
</feature>
<feature type="binding site" evidence="1">
    <location>
        <begin position="87"/>
        <end position="91"/>
    </location>
    <ligand>
        <name>ATP</name>
        <dbReference type="ChEBI" id="CHEBI:30616"/>
    </ligand>
</feature>
<feature type="binding site" evidence="1">
    <location>
        <position position="415"/>
    </location>
    <ligand>
        <name>ATP</name>
        <dbReference type="ChEBI" id="CHEBI:30616"/>
    </ligand>
</feature>
<feature type="binding site" evidence="1">
    <location>
        <begin position="479"/>
        <end position="481"/>
    </location>
    <ligand>
        <name>ATP</name>
        <dbReference type="ChEBI" id="CHEBI:30616"/>
    </ligand>
</feature>
<feature type="binding site" evidence="1">
    <location>
        <position position="495"/>
    </location>
    <ligand>
        <name>ATP</name>
        <dbReference type="ChEBI" id="CHEBI:30616"/>
    </ligand>
</feature>
<comment type="function">
    <text evidence="1">Together with its co-chaperonin GroES, plays an essential role in assisting protein folding. The GroEL-GroES system forms a nano-cage that allows encapsulation of the non-native substrate proteins and provides a physical environment optimized to promote and accelerate protein folding.</text>
</comment>
<comment type="catalytic activity">
    <reaction evidence="1">
        <text>ATP + H2O + a folded polypeptide = ADP + phosphate + an unfolded polypeptide.</text>
        <dbReference type="EC" id="5.6.1.7"/>
    </reaction>
</comment>
<comment type="subunit">
    <text evidence="1">Forms a cylinder of 14 subunits composed of two heptameric rings stacked back-to-back. Interacts with the co-chaperonin GroES.</text>
</comment>
<comment type="subcellular location">
    <subcellularLocation>
        <location evidence="1">Cytoplasm</location>
    </subcellularLocation>
</comment>
<comment type="similarity">
    <text evidence="1">Belongs to the chaperonin (HSP60) family.</text>
</comment>
<dbReference type="EC" id="5.6.1.7" evidence="1"/>
<dbReference type="EMBL" id="CP001011">
    <property type="protein sequence ID" value="ACB93031.1"/>
    <property type="molecule type" value="Genomic_DNA"/>
</dbReference>
<dbReference type="RefSeq" id="WP_011098153.1">
    <property type="nucleotide sequence ID" value="NC_010577.1"/>
</dbReference>
<dbReference type="SMR" id="B2I7D4"/>
<dbReference type="GeneID" id="93905365"/>
<dbReference type="KEGG" id="xfn:XfasM23_1623"/>
<dbReference type="HOGENOM" id="CLU_016503_3_0_6"/>
<dbReference type="Proteomes" id="UP000001698">
    <property type="component" value="Chromosome"/>
</dbReference>
<dbReference type="GO" id="GO:0005737">
    <property type="term" value="C:cytoplasm"/>
    <property type="evidence" value="ECO:0007669"/>
    <property type="project" value="UniProtKB-SubCell"/>
</dbReference>
<dbReference type="GO" id="GO:0005524">
    <property type="term" value="F:ATP binding"/>
    <property type="evidence" value="ECO:0007669"/>
    <property type="project" value="UniProtKB-UniRule"/>
</dbReference>
<dbReference type="GO" id="GO:0140662">
    <property type="term" value="F:ATP-dependent protein folding chaperone"/>
    <property type="evidence" value="ECO:0007669"/>
    <property type="project" value="InterPro"/>
</dbReference>
<dbReference type="GO" id="GO:0016853">
    <property type="term" value="F:isomerase activity"/>
    <property type="evidence" value="ECO:0007669"/>
    <property type="project" value="UniProtKB-KW"/>
</dbReference>
<dbReference type="GO" id="GO:0051082">
    <property type="term" value="F:unfolded protein binding"/>
    <property type="evidence" value="ECO:0007669"/>
    <property type="project" value="UniProtKB-UniRule"/>
</dbReference>
<dbReference type="GO" id="GO:0042026">
    <property type="term" value="P:protein refolding"/>
    <property type="evidence" value="ECO:0007669"/>
    <property type="project" value="UniProtKB-UniRule"/>
</dbReference>
<dbReference type="CDD" id="cd03344">
    <property type="entry name" value="GroEL"/>
    <property type="match status" value="1"/>
</dbReference>
<dbReference type="FunFam" id="1.10.560.10:FF:000001">
    <property type="entry name" value="60 kDa chaperonin"/>
    <property type="match status" value="1"/>
</dbReference>
<dbReference type="FunFam" id="3.50.7.10:FF:000001">
    <property type="entry name" value="60 kDa chaperonin"/>
    <property type="match status" value="1"/>
</dbReference>
<dbReference type="Gene3D" id="3.50.7.10">
    <property type="entry name" value="GroEL"/>
    <property type="match status" value="1"/>
</dbReference>
<dbReference type="Gene3D" id="1.10.560.10">
    <property type="entry name" value="GroEL-like equatorial domain"/>
    <property type="match status" value="1"/>
</dbReference>
<dbReference type="Gene3D" id="3.30.260.10">
    <property type="entry name" value="TCP-1-like chaperonin intermediate domain"/>
    <property type="match status" value="1"/>
</dbReference>
<dbReference type="HAMAP" id="MF_00600">
    <property type="entry name" value="CH60"/>
    <property type="match status" value="1"/>
</dbReference>
<dbReference type="InterPro" id="IPR018370">
    <property type="entry name" value="Chaperonin_Cpn60_CS"/>
</dbReference>
<dbReference type="InterPro" id="IPR001844">
    <property type="entry name" value="Cpn60/GroEL"/>
</dbReference>
<dbReference type="InterPro" id="IPR002423">
    <property type="entry name" value="Cpn60/GroEL/TCP-1"/>
</dbReference>
<dbReference type="InterPro" id="IPR027409">
    <property type="entry name" value="GroEL-like_apical_dom_sf"/>
</dbReference>
<dbReference type="InterPro" id="IPR027413">
    <property type="entry name" value="GROEL-like_equatorial_sf"/>
</dbReference>
<dbReference type="InterPro" id="IPR027410">
    <property type="entry name" value="TCP-1-like_intermed_sf"/>
</dbReference>
<dbReference type="NCBIfam" id="TIGR02348">
    <property type="entry name" value="GroEL"/>
    <property type="match status" value="1"/>
</dbReference>
<dbReference type="NCBIfam" id="NF000592">
    <property type="entry name" value="PRK00013.1"/>
    <property type="match status" value="1"/>
</dbReference>
<dbReference type="NCBIfam" id="NF009487">
    <property type="entry name" value="PRK12849.1"/>
    <property type="match status" value="1"/>
</dbReference>
<dbReference type="NCBIfam" id="NF009488">
    <property type="entry name" value="PRK12850.1"/>
    <property type="match status" value="1"/>
</dbReference>
<dbReference type="NCBIfam" id="NF009489">
    <property type="entry name" value="PRK12851.1"/>
    <property type="match status" value="1"/>
</dbReference>
<dbReference type="PANTHER" id="PTHR45633">
    <property type="entry name" value="60 KDA HEAT SHOCK PROTEIN, MITOCHONDRIAL"/>
    <property type="match status" value="1"/>
</dbReference>
<dbReference type="Pfam" id="PF00118">
    <property type="entry name" value="Cpn60_TCP1"/>
    <property type="match status" value="1"/>
</dbReference>
<dbReference type="PRINTS" id="PR00298">
    <property type="entry name" value="CHAPERONIN60"/>
</dbReference>
<dbReference type="SUPFAM" id="SSF52029">
    <property type="entry name" value="GroEL apical domain-like"/>
    <property type="match status" value="1"/>
</dbReference>
<dbReference type="SUPFAM" id="SSF48592">
    <property type="entry name" value="GroEL equatorial domain-like"/>
    <property type="match status" value="1"/>
</dbReference>
<dbReference type="SUPFAM" id="SSF54849">
    <property type="entry name" value="GroEL-intermediate domain like"/>
    <property type="match status" value="1"/>
</dbReference>
<dbReference type="PROSITE" id="PS00296">
    <property type="entry name" value="CHAPERONINS_CPN60"/>
    <property type="match status" value="1"/>
</dbReference>
<evidence type="ECO:0000255" key="1">
    <source>
        <dbReference type="HAMAP-Rule" id="MF_00600"/>
    </source>
</evidence>
<evidence type="ECO:0000256" key="2">
    <source>
        <dbReference type="SAM" id="MobiDB-lite"/>
    </source>
</evidence>
<protein>
    <recommendedName>
        <fullName evidence="1">Chaperonin GroEL</fullName>
        <ecNumber evidence="1">5.6.1.7</ecNumber>
    </recommendedName>
    <alternativeName>
        <fullName evidence="1">60 kDa chaperonin</fullName>
    </alternativeName>
    <alternativeName>
        <fullName evidence="1">Chaperonin-60</fullName>
        <shortName evidence="1">Cpn60</shortName>
    </alternativeName>
</protein>
<sequence length="547" mass="57775">MAAKEIIFSEKARSRMVHGVNLLANAVKATLGPKGRHVVLDKSFGSPIITKDGVSVAKEIELADKFENMGAQMLKEVASKTNDHAGDGTTTATVLAQALIREGCKAVAAGMNPMDLKRGIDKAVIAAVTELKKISKPTSDDKAIAQVATISANSDESIGNIIAEAMKKVGKEGVITIEEGTTLENELDVVEGMQFDRGYSSPYFINNQQSQIVELDNPYILLHDKKISSVRDLLTVLDAVAKESKPLLIVAEEVEGEALATLVVNNIRGIIKVCAVKAPGFGDRRKAMLEDMAVLTGGTVISEEVGLSLEKATTSHLGKAKKVRVSKENTTIIDGMGDNDAINGRVKQIKTQIEETTSDYDREKLQERVAKLAGGVAVIKVGAATEVEMKEKKARVDDALLATRAAVEEGVIPGGGVALIRAITAISNLKGANEDQTHGIQIALRAMEAPLREIVANAGEEPSVILNKVKEGKDNFGYNAATGEFGDMVNLGILDPTKVTRSALQNAASIAGLMITTEAMVAEAPKKDEPTPPAAGGGMGGMGGMDF</sequence>
<gene>
    <name evidence="1" type="primary">groEL</name>
    <name evidence="1" type="synonym">groL</name>
    <name type="ordered locus">XfasM23_1623</name>
</gene>
<keyword id="KW-0067">ATP-binding</keyword>
<keyword id="KW-0143">Chaperone</keyword>
<keyword id="KW-0963">Cytoplasm</keyword>
<keyword id="KW-0413">Isomerase</keyword>
<keyword id="KW-0547">Nucleotide-binding</keyword>
<name>CH60_XYLF2</name>
<proteinExistence type="inferred from homology"/>
<accession>B2I7D4</accession>